<feature type="chain" id="PRO_0000292528" description="Patatin-like phospholipase domain-containing protein 2">
    <location>
        <begin position="1"/>
        <end position="486"/>
    </location>
</feature>
<feature type="topological domain" description="Cytoplasmic" evidence="1">
    <location>
        <begin position="1"/>
        <end position="8"/>
    </location>
</feature>
<feature type="transmembrane region" description="Helical" evidence="2">
    <location>
        <begin position="9"/>
        <end position="29"/>
    </location>
</feature>
<feature type="topological domain" description="Extracellular" evidence="1">
    <location>
        <begin position="30"/>
        <end position="42"/>
    </location>
</feature>
<feature type="transmembrane region" description="Helical" evidence="2">
    <location>
        <begin position="43"/>
        <end position="63"/>
    </location>
</feature>
<feature type="topological domain" description="Cytoplasmic" evidence="1">
    <location>
        <begin position="64"/>
        <end position="137"/>
    </location>
</feature>
<feature type="transmembrane region" description="Helical" evidence="2">
    <location>
        <begin position="138"/>
        <end position="158"/>
    </location>
</feature>
<feature type="topological domain" description="Extracellular" evidence="1">
    <location>
        <begin position="159"/>
        <end position="331"/>
    </location>
</feature>
<feature type="transmembrane region" description="Helical" evidence="2">
    <location>
        <begin position="332"/>
        <end position="352"/>
    </location>
</feature>
<feature type="topological domain" description="Cytoplasmic" evidence="1">
    <location>
        <begin position="353"/>
        <end position="486"/>
    </location>
</feature>
<feature type="domain" description="PNPLA" evidence="3">
    <location>
        <begin position="10"/>
        <end position="179"/>
    </location>
</feature>
<feature type="region of interest" description="Disordered" evidence="4">
    <location>
        <begin position="465"/>
        <end position="486"/>
    </location>
</feature>
<feature type="short sequence motif" description="GXGXXG" evidence="3">
    <location>
        <begin position="14"/>
        <end position="19"/>
    </location>
</feature>
<feature type="short sequence motif" description="GXSXG" evidence="3">
    <location>
        <begin position="45"/>
        <end position="49"/>
    </location>
</feature>
<feature type="short sequence motif" description="DGA/G" evidence="3">
    <location>
        <begin position="166"/>
        <end position="168"/>
    </location>
</feature>
<feature type="compositionally biased region" description="Low complexity" evidence="4">
    <location>
        <begin position="465"/>
        <end position="476"/>
    </location>
</feature>
<feature type="compositionally biased region" description="Pro residues" evidence="4">
    <location>
        <begin position="477"/>
        <end position="486"/>
    </location>
</feature>
<feature type="active site" description="Nucleophile" evidence="3">
    <location>
        <position position="47"/>
    </location>
</feature>
<feature type="active site" description="Proton acceptor" evidence="3">
    <location>
        <position position="166"/>
    </location>
</feature>
<feature type="modified residue" description="Phosphoserine; in vitro" evidence="18">
    <location>
        <position position="374"/>
    </location>
</feature>
<feature type="modified residue" description="Phosphoserine; by PKA" evidence="18">
    <location>
        <position position="396"/>
    </location>
</feature>
<feature type="modified residue" description="Phosphoserine; by PKA" evidence="18 26">
    <location>
        <position position="406"/>
    </location>
</feature>
<feature type="modified residue" description="Phosphoserine; in vitro" evidence="18 26">
    <location>
        <position position="430"/>
    </location>
</feature>
<feature type="modified residue" description="Phosphoserine; in vitro" evidence="18">
    <location>
        <position position="468"/>
    </location>
</feature>
<feature type="glycosylation site" description="N-linked (GlcNAc...) asparagine" evidence="2">
    <location>
        <position position="39"/>
    </location>
</feature>
<feature type="cross-link" description="Glycyl lysine isopeptide (Lys-Gly) (interchain with G-Cter in ubiquitin)" evidence="1">
    <location>
        <position position="92"/>
    </location>
</feature>
<feature type="splice variant" id="VSP_026422" description="In isoform 3." evidence="21">
    <location>
        <begin position="1"/>
        <end position="56"/>
    </location>
</feature>
<feature type="splice variant" id="VSP_026423" description="In isoform 3." evidence="21">
    <original>VTGACL</original>
    <variation>MSHACQ</variation>
    <location>
        <begin position="57"/>
        <end position="62"/>
    </location>
</feature>
<feature type="splice variant" id="VSP_026424" description="In isoform 2." evidence="22">
    <location>
        <begin position="253"/>
        <end position="308"/>
    </location>
</feature>
<feature type="mutagenesis site" description="Loss of triacylglycerol hydrolysis activity." evidence="11">
    <original>S</original>
    <variation>A</variation>
    <location>
        <position position="47"/>
    </location>
</feature>
<feature type="mutagenesis site" description="Slightly reduced TG hydrolase activity." evidence="18">
    <original>S</original>
    <variation>A</variation>
    <location>
        <position position="396"/>
    </location>
</feature>
<feature type="mutagenesis site" description="Reduced TG hydrolase activity." evidence="18">
    <original>S</original>
    <variation>A</variation>
    <location>
        <position position="406"/>
    </location>
</feature>
<feature type="sequence conflict" description="In Ref. 4; BAB22387." evidence="23" ref="4">
    <original>P</original>
    <variation>T</variation>
    <location>
        <position position="3"/>
    </location>
</feature>
<feature type="sequence conflict" description="In Ref. 1; AAU33824." evidence="23" ref="1">
    <original>R</original>
    <variation>H</variation>
    <location>
        <position position="30"/>
    </location>
</feature>
<feature type="sequence conflict" description="In Ref. 4; BAE29364." evidence="23" ref="4">
    <original>I</original>
    <variation>V</variation>
    <location>
        <position position="193"/>
    </location>
</feature>
<feature type="sequence conflict" description="In Ref. 4; BAB22643." evidence="23" ref="4">
    <original>DL</original>
    <variation>VG</variation>
    <location>
        <begin position="319"/>
        <end position="320"/>
    </location>
</feature>
<feature type="sequence conflict" description="In Ref. 4; BAE29364." evidence="23" ref="4">
    <original>P</original>
    <variation>T</variation>
    <location>
        <position position="362"/>
    </location>
</feature>
<feature type="sequence conflict" description="In Ref. 6; AAC36536." evidence="23" ref="6">
    <original>R</original>
    <variation>G</variation>
    <location>
        <position position="385"/>
    </location>
</feature>
<feature type="sequence conflict" description="In Ref. 5; AAH64747." evidence="23" ref="5">
    <original>D</original>
    <variation>G</variation>
    <location>
        <position position="389"/>
    </location>
</feature>
<feature type="sequence conflict" description="In Ref. 6; AAC36536." evidence="23" ref="6">
    <original>L</original>
    <variation>P</variation>
    <location>
        <position position="412"/>
    </location>
</feature>
<accession>Q8BJ56</accession>
<accession>O89080</accession>
<accession>Q05BJ0</accession>
<accession>Q3UD97</accession>
<accession>Q643S0</accession>
<accession>Q6P234</accession>
<accession>Q9D1Q9</accession>
<accession>Q9DCF6</accession>
<proteinExistence type="evidence at protein level"/>
<reference key="1">
    <citation type="journal article" date="2004" name="J. Biol. Chem.">
        <title>Desnutrin, an adipocyte gene encoding a novel patatin domain-containing protein, is induced by fasting and glucocorticoids: ectopic expression of desnutrin increases triglyceride hydrolysis.</title>
        <authorList>
            <person name="Villena J.A."/>
            <person name="Roy S."/>
            <person name="Sarkadi-Nagy E."/>
            <person name="Kim K.-H."/>
            <person name="Sul H.S."/>
        </authorList>
    </citation>
    <scope>NUCLEOTIDE SEQUENCE [MRNA] (ISOFORM 1)</scope>
    <scope>FUNCTION</scope>
    <scope>SUBCELLULAR LOCATION</scope>
    <scope>TISSUE SPECIFICITY</scope>
    <scope>DEVELOPMENTAL STAGE</scope>
    <scope>INDUCTION</scope>
    <scope>CATALYTIC ACTIVITY</scope>
    <source>
        <strain>C57BL/6J</strain>
        <tissue>White adipose tissue</tissue>
    </source>
</reference>
<reference key="2">
    <citation type="journal article" date="2004" name="Science">
        <title>Fat mobilization in adipose tissue is promoted by adipose triglyceride lipase.</title>
        <authorList>
            <person name="Zimmermann R."/>
            <person name="Strauss J.G."/>
            <person name="Haemmerle G."/>
            <person name="Schoiswohl G."/>
            <person name="Birner-Gruenberger R."/>
            <person name="Riederer M."/>
            <person name="Lass A."/>
            <person name="Neuberger G."/>
            <person name="Eisenhaber F."/>
            <person name="Hermetter A."/>
            <person name="Zechner R."/>
        </authorList>
    </citation>
    <scope>NUCLEOTIDE SEQUENCE [MRNA] (ISOFORM 1)</scope>
    <scope>FUNCTION</scope>
    <scope>ACTIVITY REGULATION</scope>
    <scope>SUBCELLULAR LOCATION</scope>
    <scope>TISSUE SPECIFICITY</scope>
    <scope>DEVELOPMENTAL STAGE</scope>
    <scope>PHOSPHORYLATION</scope>
    <scope>CATALYTIC ACTIVITY</scope>
    <source>
        <strain>C57BL/6J</strain>
    </source>
</reference>
<reference key="3">
    <citation type="journal article" date="2006" name="Am. J. Physiol.">
        <title>The adipose tissue triglyceride lipase ATGL/PNPLA2 is downregulated by insulin and TNF-alpha in 3T3-L1 adipocytes and is a target for transactivation by PPARgamma.</title>
        <authorList>
            <person name="Kim J.Y."/>
            <person name="Tillison K."/>
            <person name="Lee J.-H."/>
            <person name="Rearick D.A."/>
            <person name="Smas C.M."/>
        </authorList>
    </citation>
    <scope>NUCLEOTIDE SEQUENCE [MRNA] (ISOFORM 1)</scope>
    <scope>SUBCELLULAR LOCATION</scope>
    <scope>TISSUE SPECIFICITY</scope>
    <scope>DEVELOPMENTAL STAGE</scope>
    <scope>INDUCTION</scope>
    <source>
        <strain>C57BL/6J</strain>
    </source>
</reference>
<reference key="4">
    <citation type="journal article" date="2005" name="Science">
        <title>The transcriptional landscape of the mammalian genome.</title>
        <authorList>
            <person name="Carninci P."/>
            <person name="Kasukawa T."/>
            <person name="Katayama S."/>
            <person name="Gough J."/>
            <person name="Frith M.C."/>
            <person name="Maeda N."/>
            <person name="Oyama R."/>
            <person name="Ravasi T."/>
            <person name="Lenhard B."/>
            <person name="Wells C."/>
            <person name="Kodzius R."/>
            <person name="Shimokawa K."/>
            <person name="Bajic V.B."/>
            <person name="Brenner S.E."/>
            <person name="Batalov S."/>
            <person name="Forrest A.R."/>
            <person name="Zavolan M."/>
            <person name="Davis M.J."/>
            <person name="Wilming L.G."/>
            <person name="Aidinis V."/>
            <person name="Allen J.E."/>
            <person name="Ambesi-Impiombato A."/>
            <person name="Apweiler R."/>
            <person name="Aturaliya R.N."/>
            <person name="Bailey T.L."/>
            <person name="Bansal M."/>
            <person name="Baxter L."/>
            <person name="Beisel K.W."/>
            <person name="Bersano T."/>
            <person name="Bono H."/>
            <person name="Chalk A.M."/>
            <person name="Chiu K.P."/>
            <person name="Choudhary V."/>
            <person name="Christoffels A."/>
            <person name="Clutterbuck D.R."/>
            <person name="Crowe M.L."/>
            <person name="Dalla E."/>
            <person name="Dalrymple B.P."/>
            <person name="de Bono B."/>
            <person name="Della Gatta G."/>
            <person name="di Bernardo D."/>
            <person name="Down T."/>
            <person name="Engstrom P."/>
            <person name="Fagiolini M."/>
            <person name="Faulkner G."/>
            <person name="Fletcher C.F."/>
            <person name="Fukushima T."/>
            <person name="Furuno M."/>
            <person name="Futaki S."/>
            <person name="Gariboldi M."/>
            <person name="Georgii-Hemming P."/>
            <person name="Gingeras T.R."/>
            <person name="Gojobori T."/>
            <person name="Green R.E."/>
            <person name="Gustincich S."/>
            <person name="Harbers M."/>
            <person name="Hayashi Y."/>
            <person name="Hensch T.K."/>
            <person name="Hirokawa N."/>
            <person name="Hill D."/>
            <person name="Huminiecki L."/>
            <person name="Iacono M."/>
            <person name="Ikeo K."/>
            <person name="Iwama A."/>
            <person name="Ishikawa T."/>
            <person name="Jakt M."/>
            <person name="Kanapin A."/>
            <person name="Katoh M."/>
            <person name="Kawasawa Y."/>
            <person name="Kelso J."/>
            <person name="Kitamura H."/>
            <person name="Kitano H."/>
            <person name="Kollias G."/>
            <person name="Krishnan S.P."/>
            <person name="Kruger A."/>
            <person name="Kummerfeld S.K."/>
            <person name="Kurochkin I.V."/>
            <person name="Lareau L.F."/>
            <person name="Lazarevic D."/>
            <person name="Lipovich L."/>
            <person name="Liu J."/>
            <person name="Liuni S."/>
            <person name="McWilliam S."/>
            <person name="Madan Babu M."/>
            <person name="Madera M."/>
            <person name="Marchionni L."/>
            <person name="Matsuda H."/>
            <person name="Matsuzawa S."/>
            <person name="Miki H."/>
            <person name="Mignone F."/>
            <person name="Miyake S."/>
            <person name="Morris K."/>
            <person name="Mottagui-Tabar S."/>
            <person name="Mulder N."/>
            <person name="Nakano N."/>
            <person name="Nakauchi H."/>
            <person name="Ng P."/>
            <person name="Nilsson R."/>
            <person name="Nishiguchi S."/>
            <person name="Nishikawa S."/>
            <person name="Nori F."/>
            <person name="Ohara O."/>
            <person name="Okazaki Y."/>
            <person name="Orlando V."/>
            <person name="Pang K.C."/>
            <person name="Pavan W.J."/>
            <person name="Pavesi G."/>
            <person name="Pesole G."/>
            <person name="Petrovsky N."/>
            <person name="Piazza S."/>
            <person name="Reed J."/>
            <person name="Reid J.F."/>
            <person name="Ring B.Z."/>
            <person name="Ringwald M."/>
            <person name="Rost B."/>
            <person name="Ruan Y."/>
            <person name="Salzberg S.L."/>
            <person name="Sandelin A."/>
            <person name="Schneider C."/>
            <person name="Schoenbach C."/>
            <person name="Sekiguchi K."/>
            <person name="Semple C.A."/>
            <person name="Seno S."/>
            <person name="Sessa L."/>
            <person name="Sheng Y."/>
            <person name="Shibata Y."/>
            <person name="Shimada H."/>
            <person name="Shimada K."/>
            <person name="Silva D."/>
            <person name="Sinclair B."/>
            <person name="Sperling S."/>
            <person name="Stupka E."/>
            <person name="Sugiura K."/>
            <person name="Sultana R."/>
            <person name="Takenaka Y."/>
            <person name="Taki K."/>
            <person name="Tammoja K."/>
            <person name="Tan S.L."/>
            <person name="Tang S."/>
            <person name="Taylor M.S."/>
            <person name="Tegner J."/>
            <person name="Teichmann S.A."/>
            <person name="Ueda H.R."/>
            <person name="van Nimwegen E."/>
            <person name="Verardo R."/>
            <person name="Wei C.L."/>
            <person name="Yagi K."/>
            <person name="Yamanishi H."/>
            <person name="Zabarovsky E."/>
            <person name="Zhu S."/>
            <person name="Zimmer A."/>
            <person name="Hide W."/>
            <person name="Bult C."/>
            <person name="Grimmond S.M."/>
            <person name="Teasdale R.D."/>
            <person name="Liu E.T."/>
            <person name="Brusic V."/>
            <person name="Quackenbush J."/>
            <person name="Wahlestedt C."/>
            <person name="Mattick J.S."/>
            <person name="Hume D.A."/>
            <person name="Kai C."/>
            <person name="Sasaki D."/>
            <person name="Tomaru Y."/>
            <person name="Fukuda S."/>
            <person name="Kanamori-Katayama M."/>
            <person name="Suzuki M."/>
            <person name="Aoki J."/>
            <person name="Arakawa T."/>
            <person name="Iida J."/>
            <person name="Imamura K."/>
            <person name="Itoh M."/>
            <person name="Kato T."/>
            <person name="Kawaji H."/>
            <person name="Kawagashira N."/>
            <person name="Kawashima T."/>
            <person name="Kojima M."/>
            <person name="Kondo S."/>
            <person name="Konno H."/>
            <person name="Nakano K."/>
            <person name="Ninomiya N."/>
            <person name="Nishio T."/>
            <person name="Okada M."/>
            <person name="Plessy C."/>
            <person name="Shibata K."/>
            <person name="Shiraki T."/>
            <person name="Suzuki S."/>
            <person name="Tagami M."/>
            <person name="Waki K."/>
            <person name="Watahiki A."/>
            <person name="Okamura-Oho Y."/>
            <person name="Suzuki H."/>
            <person name="Kawai J."/>
            <person name="Hayashizaki Y."/>
        </authorList>
    </citation>
    <scope>NUCLEOTIDE SEQUENCE [LARGE SCALE MRNA] (ISOFORMS 1 AND 2)</scope>
    <source>
        <strain>C57BL/6J</strain>
        <tissue>Bone marrow</tissue>
        <tissue>Kidney</tissue>
        <tissue>Testis</tissue>
    </source>
</reference>
<reference key="5">
    <citation type="journal article" date="2004" name="Genome Res.">
        <title>The status, quality, and expansion of the NIH full-length cDNA project: the Mammalian Gene Collection (MGC).</title>
        <authorList>
            <consortium name="The MGC Project Team"/>
        </authorList>
    </citation>
    <scope>NUCLEOTIDE SEQUENCE [LARGE SCALE MRNA] (ISOFORMS 1 AND 3)</scope>
    <source>
        <strain>FVB/N</strain>
        <tissue>Trophoblast stem cell</tissue>
    </source>
</reference>
<reference key="6">
    <citation type="journal article" date="1998" name="Mol. Immunol.">
        <title>Expressed genes in interleukin-4 treated B cells identified by cDNA representational difference analysis.</title>
        <authorList>
            <person name="Chu C.C."/>
            <person name="Paul W.E."/>
        </authorList>
    </citation>
    <scope>NUCLEOTIDE SEQUENCE [LARGE SCALE MRNA] OF 296-473</scope>
    <source>
        <strain>BALB/cJ</strain>
        <tissue>Spleen</tissue>
    </source>
</reference>
<reference key="7">
    <citation type="journal article" date="2005" name="J. Lipid Res.">
        <title>Expression, regulation, and triglyceride hydrolase activity of Adiponutrin family members.</title>
        <authorList>
            <person name="Lake A.C."/>
            <person name="Sun Y."/>
            <person name="Li J.-L."/>
            <person name="Kim J.E."/>
            <person name="Johnson J.W."/>
            <person name="Li D."/>
            <person name="Revett T."/>
            <person name="Shih H.H."/>
            <person name="Liu W."/>
            <person name="Paulsen J.E."/>
            <person name="Gimeno R.E."/>
        </authorList>
    </citation>
    <scope>TISSUE SPECIFICITY</scope>
    <scope>DEVELOPMENTAL STAGE</scope>
    <scope>INDUCTION</scope>
</reference>
<reference key="8">
    <citation type="journal article" date="2005" name="Mol. Cell. Endocrinol.">
        <title>Isoproterenol, TNFalpha, and insulin downregulate adipose triglyceride lipase in 3T3-L1 adipocytes.</title>
        <authorList>
            <person name="Kralisch S."/>
            <person name="Klein J."/>
            <person name="Lossner U."/>
            <person name="Bluher M."/>
            <person name="Paschke R."/>
            <person name="Stumvoll M."/>
            <person name="Fasshauer M."/>
        </authorList>
    </citation>
    <scope>INDUCTION</scope>
</reference>
<reference key="9">
    <citation type="journal article" date="2006" name="Cell Metab.">
        <title>Adipose triglyceride lipase-mediated lipolysis of cellular fat stores is activated by CGI-58 and defective in Chanarin-Dorfman Syndrome.</title>
        <authorList>
            <person name="Lass A."/>
            <person name="Zimmermann R."/>
            <person name="Haemmerle G."/>
            <person name="Riederer M."/>
            <person name="Schoiswohl G."/>
            <person name="Schweiger M."/>
            <person name="Kienesberger P."/>
            <person name="Strauss J.G."/>
            <person name="Gorkiewicz G."/>
            <person name="Zechner R."/>
        </authorList>
    </citation>
    <scope>FUNCTION</scope>
    <scope>CATALYTIC ACTIVITY</scope>
    <scope>INTERACTION WITH ABHD5</scope>
    <scope>MUTAGENESIS OF SER-47</scope>
</reference>
<reference key="10">
    <citation type="journal article" date="2006" name="Diabetes">
        <title>Adipose triglyceride lipase: function, regulation by insulin, and comparison with adiponutrin.</title>
        <authorList>
            <person name="Kershaw E.E."/>
            <person name="Hamm J.K."/>
            <person name="Verhagen L.A.W."/>
            <person name="Peroni O."/>
            <person name="Katic M."/>
            <person name="Flier J.S."/>
        </authorList>
    </citation>
    <scope>INDUCTION</scope>
</reference>
<reference key="11">
    <citation type="journal article" date="2006" name="J. Biol. Chem.">
        <title>Adipose triglyceride lipase and hormone-sensitive lipase are the major enzymes in adipose tissue triacylglycerol catabolism.</title>
        <authorList>
            <person name="Schweiger M."/>
            <person name="Schreiber R."/>
            <person name="Haemmerle G."/>
            <person name="Lass A."/>
            <person name="Fledelius C."/>
            <person name="Jacobsen P."/>
            <person name="Tornqvist H."/>
            <person name="Zechner R."/>
            <person name="Zimmermann R."/>
        </authorList>
    </citation>
    <scope>FUNCTION</scope>
    <scope>ACTIVITY REGULATION</scope>
    <scope>CATALYTIC ACTIVITY</scope>
</reference>
<reference key="12">
    <citation type="journal article" date="2006" name="Science">
        <title>Defective lipolysis and altered energy metabolism in mice lacking adipose triglyceride lipase.</title>
        <authorList>
            <person name="Haemmerle G."/>
            <person name="Lass A."/>
            <person name="Zimmermann R."/>
            <person name="Gorkiewicz G."/>
            <person name="Meyer C."/>
            <person name="Rozman J."/>
            <person name="Heldmaier G."/>
            <person name="Maier R."/>
            <person name="Theussl C."/>
            <person name="Eder S."/>
            <person name="Kratky D."/>
            <person name="Wagner E.F."/>
            <person name="Klingenspor M."/>
            <person name="Hoefler G."/>
            <person name="Zechner R."/>
        </authorList>
    </citation>
    <scope>FUNCTION</scope>
    <scope>DISRUPTION PHENOTYPE</scope>
    <scope>CATALYTIC ACTIVITY</scope>
</reference>
<reference key="13">
    <citation type="journal article" date="2007" name="J. Biol. Chem.">
        <title>Control of adipose triglyceride lipase action by serine 517 of perilipin A globally regulates protein kinase A-stimulated lipolysis in adipocytes.</title>
        <authorList>
            <person name="Miyoshi H."/>
            <person name="Perfield J.W. II"/>
            <person name="Souza S.C."/>
            <person name="Shen W.-J."/>
            <person name="Zhang H.-H."/>
            <person name="Stancheva Z.S."/>
            <person name="Kraemer F.B."/>
            <person name="Obin M.S."/>
            <person name="Greenberg A.S."/>
        </authorList>
    </citation>
    <scope>ACTIVITY REGULATION</scope>
    <scope>FUNCTION</scope>
    <scope>CATALYTIC ACTIVITY</scope>
</reference>
<reference key="14">
    <citation type="journal article" date="2007" name="J. Biol. Chem.">
        <title>Analysis of lipolytic protein trafficking and interactions in adipocytes.</title>
        <authorList>
            <person name="Granneman J.G."/>
            <person name="Moore H.-P.H."/>
            <person name="Granneman R.L."/>
            <person name="Greenberg A.S."/>
            <person name="Obin M.S."/>
            <person name="Zhu Z."/>
        </authorList>
    </citation>
    <scope>INTERACTION WITH ABHD5</scope>
    <scope>LACK OF INTERACTION WITH PLIN</scope>
</reference>
<reference key="15">
    <citation type="journal article" date="2010" name="Cell">
        <title>A tissue-specific atlas of mouse protein phosphorylation and expression.</title>
        <authorList>
            <person name="Huttlin E.L."/>
            <person name="Jedrychowski M.P."/>
            <person name="Elias J.E."/>
            <person name="Goswami T."/>
            <person name="Rad R."/>
            <person name="Beausoleil S.A."/>
            <person name="Villen J."/>
            <person name="Haas W."/>
            <person name="Sowa M.E."/>
            <person name="Gygi S.P."/>
        </authorList>
    </citation>
    <scope>PHOSPHORYLATION [LARGE SCALE ANALYSIS] AT SER-406 AND SER-430</scope>
    <scope>IDENTIFICATION BY MASS SPECTROMETRY [LARGE SCALE ANALYSIS]</scope>
    <source>
        <tissue>Brown adipose tissue</tissue>
        <tissue>Testis</tissue>
    </source>
</reference>
<reference key="16">
    <citation type="journal article" date="2011" name="J. Biol. Chem.">
        <title>Interactions of perilipin-5 (Plin5) with adipose triglyceride lipase.</title>
        <authorList>
            <person name="Granneman J.G."/>
            <person name="Moore H.P."/>
            <person name="Mottillo E.P."/>
            <person name="Zhu Z."/>
            <person name="Zhou L."/>
        </authorList>
    </citation>
    <scope>INTERACTION WITH PLIN5</scope>
    <scope>EXCLUSION OF INTERACTION WITH ABHD5</scope>
</reference>
<reference key="17">
    <citation type="journal article" date="2011" name="J. Biol. Chem.">
        <title>Unique regulation of adipose triglyceride lipase (ATGL) by perilipin 5, a lipid droplet-associated protein.</title>
        <authorList>
            <person name="Wang H."/>
            <person name="Bell M."/>
            <person name="Sreenivasan U."/>
            <person name="Sreenevasan U."/>
            <person name="Hu H."/>
            <person name="Liu J."/>
            <person name="Dalen K."/>
            <person name="Londos C."/>
            <person name="Yamaguchi T."/>
            <person name="Rizzo M.A."/>
            <person name="Coleman R."/>
            <person name="Gong D."/>
            <person name="Brasaemle D."/>
            <person name="Sztalryd C."/>
        </authorList>
    </citation>
    <scope>INTERACTION WITH PLIN5</scope>
</reference>
<reference key="18">
    <citation type="journal article" date="2012" name="Endocrinology">
        <title>Identification and functional characterization of protein kinase A phosphorylation sites in the major lipolytic protein, adipose triglyceride lipase.</title>
        <authorList>
            <person name="Pagnon J."/>
            <person name="Matzaris M."/>
            <person name="Stark R."/>
            <person name="Meex R.C."/>
            <person name="Macaulay S.L."/>
            <person name="Brown W."/>
            <person name="O'Brien P.E."/>
            <person name="Tiganis T."/>
            <person name="Watt M.J."/>
        </authorList>
    </citation>
    <scope>PHOSPHORYLATION AT SER-374; SER-396; SER-406; SER-430 AND SER-468</scope>
    <scope>MUTAGENESIS OF SER-396 AND SER-406</scope>
</reference>
<reference key="19">
    <citation type="journal article" date="2012" name="J. Biol. Chem.">
        <title>Studies on the substrate and stereo/regioselectivity of adipose triglyceride lipase, hormone-sensitive lipase, and diacylglycerol-O-acyltransferases.</title>
        <authorList>
            <person name="Eichmann T.O."/>
            <person name="Kumari M."/>
            <person name="Haas J.T."/>
            <person name="Farese R.V. Jr."/>
            <person name="Zimmermann R."/>
            <person name="Lass A."/>
            <person name="Zechner R."/>
        </authorList>
    </citation>
    <scope>FUNCTION</scope>
    <scope>CATALYTIC ACTIVITY</scope>
</reference>
<reference key="20">
    <citation type="journal article" date="2022" name="Nature">
        <title>ATGL is a biosynthetic enzyme for fatty acid esters of hydroxy fatty acids.</title>
        <authorList>
            <person name="Patel R."/>
            <person name="Santoro A."/>
            <person name="Hofer P."/>
            <person name="Tan D."/>
            <person name="Oberer M."/>
            <person name="Nelson A.T."/>
            <person name="Konduri S."/>
            <person name="Siegel D."/>
            <person name="Zechner R."/>
            <person name="Saghatelian A."/>
            <person name="Kahn B.B."/>
        </authorList>
    </citation>
    <scope>FUNCTION</scope>
    <scope>CATALYTIC ACTIVITY</scope>
    <scope>DISRUPTION PHENOTYPE</scope>
</reference>
<comment type="function">
    <text evidence="1 5 6 8 10 11 13 14 19 20">Catalyzes the initial step in triglyceride hydrolysis in adipocyte and non-adipocyte lipid droplets (PubMed:15337759, PubMed:15550674, PubMed:16150821, PubMed:16675698, PubMed:16679289, PubMed:17074755, PubMed:17114792, PubMed:23066022). Exhibits a strong preference for the hydrolysis of long-chain fatty acid esters at the sn-2 position of the glycerol backbone and acts coordinately with LIPE/HLS and DGAT2 within the lipolytic cascade (PubMed:23066022). Also possesses acylglycerol transacylase and phospholipase A2 activities (By similarity). Transfers fatty acid from triglyceride to retinol, hydrolyzes retinylesters, and generates 1,3-diacylglycerol from triglycerides (By similarity). Regulates adiposome size and may be involved in the degradation of adiposomes (By similarity). Catalyzes the formation of an ester bond between hydroxy fatty acids and fatty acids derived from triglycerides or diglycerides to generate fatty acid esters of hydroxy fatty acids (FAHFAs) in adipocytes (PubMed:35676490). Acts antagonistically with LDAH in regulation of cellular lipid stores (By similarity). Inhibits LDAH-stimulated lipid droplet fusion (By similarity). May play an important role in energy homeostasis (PubMed:16675698). May play a role in the response of the organism to starvation, enhancing hydrolysis of triglycerides and providing free fatty acids to other tissues to be oxidized in situations of energy depletion (PubMed:15337759).</text>
</comment>
<comment type="catalytic activity">
    <reaction evidence="5 6 8 10 11 13 14 19">
        <text>a triacylglycerol + H2O = a diacylglycerol + a fatty acid + H(+)</text>
        <dbReference type="Rhea" id="RHEA:12044"/>
        <dbReference type="ChEBI" id="CHEBI:15377"/>
        <dbReference type="ChEBI" id="CHEBI:15378"/>
        <dbReference type="ChEBI" id="CHEBI:17855"/>
        <dbReference type="ChEBI" id="CHEBI:18035"/>
        <dbReference type="ChEBI" id="CHEBI:28868"/>
        <dbReference type="EC" id="3.1.1.3"/>
    </reaction>
    <physiologicalReaction direction="left-to-right" evidence="24">
        <dbReference type="Rhea" id="RHEA:12045"/>
    </physiologicalReaction>
</comment>
<comment type="catalytic activity">
    <reaction evidence="19">
        <text>a triacylglycerol + H2O = a 1,2-diacylglycerol + a fatty acid + H(+)</text>
        <dbReference type="Rhea" id="RHEA:35667"/>
        <dbReference type="ChEBI" id="CHEBI:15377"/>
        <dbReference type="ChEBI" id="CHEBI:15378"/>
        <dbReference type="ChEBI" id="CHEBI:17855"/>
        <dbReference type="ChEBI" id="CHEBI:28868"/>
        <dbReference type="ChEBI" id="CHEBI:49172"/>
    </reaction>
    <physiologicalReaction direction="left-to-right" evidence="24">
        <dbReference type="Rhea" id="RHEA:35668"/>
    </physiologicalReaction>
</comment>
<comment type="catalytic activity">
    <reaction evidence="19">
        <text>a triacylglycerol + H2O = a 1,3-diacylglycerol + a fatty acid + H(+)</text>
        <dbReference type="Rhea" id="RHEA:38495"/>
        <dbReference type="ChEBI" id="CHEBI:15377"/>
        <dbReference type="ChEBI" id="CHEBI:15378"/>
        <dbReference type="ChEBI" id="CHEBI:17855"/>
        <dbReference type="ChEBI" id="CHEBI:28868"/>
        <dbReference type="ChEBI" id="CHEBI:47777"/>
    </reaction>
    <physiologicalReaction direction="left-to-right" evidence="24">
        <dbReference type="Rhea" id="RHEA:38496"/>
    </physiologicalReaction>
</comment>
<comment type="catalytic activity">
    <reaction evidence="19">
        <text>a triacyl-sn-glycerol + H2O = a 2,3-diacyl-sn-glycerol + a fatty acid + H(+)</text>
        <dbReference type="Rhea" id="RHEA:38499"/>
        <dbReference type="ChEBI" id="CHEBI:15377"/>
        <dbReference type="ChEBI" id="CHEBI:15378"/>
        <dbReference type="ChEBI" id="CHEBI:28868"/>
        <dbReference type="ChEBI" id="CHEBI:64615"/>
        <dbReference type="ChEBI" id="CHEBI:75524"/>
    </reaction>
    <physiologicalReaction direction="left-to-right" evidence="24">
        <dbReference type="Rhea" id="RHEA:38500"/>
    </physiologicalReaction>
</comment>
<comment type="catalytic activity">
    <reaction evidence="19">
        <text>a triacyl-sn-glycerol + H2O = a 1,3-diacyl-sn-glycerol + a fatty acid + H(+)</text>
        <dbReference type="Rhea" id="RHEA:43732"/>
        <dbReference type="ChEBI" id="CHEBI:15377"/>
        <dbReference type="ChEBI" id="CHEBI:15378"/>
        <dbReference type="ChEBI" id="CHEBI:28868"/>
        <dbReference type="ChEBI" id="CHEBI:64615"/>
        <dbReference type="ChEBI" id="CHEBI:77272"/>
    </reaction>
    <physiologicalReaction direction="left-to-right" evidence="24">
        <dbReference type="Rhea" id="RHEA:43733"/>
    </physiologicalReaction>
</comment>
<comment type="catalytic activity">
    <reaction evidence="19">
        <text>1,2,3-tri-(9Z-octadecenoyl)-glycerol + H2O = 1,3-di-(9Z-octadecenoyl)-glycerol + (9Z)-octadecenoate + H(+)</text>
        <dbReference type="Rhea" id="RHEA:38387"/>
        <dbReference type="ChEBI" id="CHEBI:15377"/>
        <dbReference type="ChEBI" id="CHEBI:15378"/>
        <dbReference type="ChEBI" id="CHEBI:30823"/>
        <dbReference type="ChEBI" id="CHEBI:53753"/>
        <dbReference type="ChEBI" id="CHEBI:75735"/>
    </reaction>
    <physiologicalReaction direction="left-to-right" evidence="24">
        <dbReference type="Rhea" id="RHEA:38388"/>
    </physiologicalReaction>
</comment>
<comment type="catalytic activity">
    <reaction evidence="19">
        <text>1,2,3-tri-(9Z)-hexadecenoylglycerol + H2O = 1,3-di-(9Z)-hexadecenoylglycerol + (9Z)-hexadecenoate + H(+)</text>
        <dbReference type="Rhea" id="RHEA:38395"/>
        <dbReference type="ChEBI" id="CHEBI:15377"/>
        <dbReference type="ChEBI" id="CHEBI:15378"/>
        <dbReference type="ChEBI" id="CHEBI:32372"/>
        <dbReference type="ChEBI" id="CHEBI:75841"/>
        <dbReference type="ChEBI" id="CHEBI:75849"/>
    </reaction>
    <physiologicalReaction direction="left-to-right" evidence="24">
        <dbReference type="Rhea" id="RHEA:38396"/>
    </physiologicalReaction>
</comment>
<comment type="catalytic activity">
    <reaction evidence="19">
        <text>1,2,3-tri-(9Z,12Z)-octadecadienoylglycerol + H2O = 1,3-di-(9Z,12Z)-octadecadienoylglycerol + (9Z,12Z)-octadecadienoate + H(+)</text>
        <dbReference type="Rhea" id="RHEA:38403"/>
        <dbReference type="ChEBI" id="CHEBI:15377"/>
        <dbReference type="ChEBI" id="CHEBI:15378"/>
        <dbReference type="ChEBI" id="CHEBI:30245"/>
        <dbReference type="ChEBI" id="CHEBI:75844"/>
        <dbReference type="ChEBI" id="CHEBI:75850"/>
    </reaction>
    <physiologicalReaction direction="left-to-right" evidence="24">
        <dbReference type="Rhea" id="RHEA:38404"/>
    </physiologicalReaction>
</comment>
<comment type="catalytic activity">
    <reaction evidence="19">
        <text>1,2,3-tri-(9Z,12Z,15Z)-octadecatrienoylglycerol + H2O = 1,3-di-(9Z,12Z,15Z)-octadecatrienoylglycerol + (9Z,12Z,15Z)-octadecatrienoate + H(+)</text>
        <dbReference type="Rhea" id="RHEA:38411"/>
        <dbReference type="ChEBI" id="CHEBI:15377"/>
        <dbReference type="ChEBI" id="CHEBI:15378"/>
        <dbReference type="ChEBI" id="CHEBI:32387"/>
        <dbReference type="ChEBI" id="CHEBI:75845"/>
        <dbReference type="ChEBI" id="CHEBI:75852"/>
    </reaction>
    <physiologicalReaction direction="left-to-right" evidence="24">
        <dbReference type="Rhea" id="RHEA:38412"/>
    </physiologicalReaction>
</comment>
<comment type="catalytic activity">
    <reaction evidence="19">
        <text>1,3-di-(9Z)-octadecenoyl-2-hexadecanoylglycerol + H2O = 1,3-di-(9Z-octadecenoyl)-glycerol + hexadecanoate + H(+)</text>
        <dbReference type="Rhea" id="RHEA:38419"/>
        <dbReference type="ChEBI" id="CHEBI:7896"/>
        <dbReference type="ChEBI" id="CHEBI:15377"/>
        <dbReference type="ChEBI" id="CHEBI:15378"/>
        <dbReference type="ChEBI" id="CHEBI:75735"/>
        <dbReference type="ChEBI" id="CHEBI:75846"/>
    </reaction>
    <physiologicalReaction direction="left-to-right" evidence="24">
        <dbReference type="Rhea" id="RHEA:38420"/>
    </physiologicalReaction>
</comment>
<comment type="catalytic activity">
    <reaction evidence="19">
        <text>1,2-di-(9Z)-octadecenoyl-3-hexadecanoyl-sn-glycerol + H2O = 1-(9Z)-octadecenoyl-3-hexadecanoyl-sn-glycerol + (9Z)-octadecenoate + H(+)</text>
        <dbReference type="Rhea" id="RHEA:38423"/>
        <dbReference type="ChEBI" id="CHEBI:15377"/>
        <dbReference type="ChEBI" id="CHEBI:15378"/>
        <dbReference type="ChEBI" id="CHEBI:30823"/>
        <dbReference type="ChEBI" id="CHEBI:75583"/>
        <dbReference type="ChEBI" id="CHEBI:75867"/>
    </reaction>
    <physiologicalReaction direction="left-to-right" evidence="24">
        <dbReference type="Rhea" id="RHEA:38424"/>
    </physiologicalReaction>
</comment>
<comment type="catalytic activity">
    <reaction evidence="19">
        <text>1-hexadecanoyl-2,3-di-(9Z)-octadecenoyl-sn-glycerol + H2O = 1-hexadecanoyl-3-(9Z)-octadecenoyl-sn-glycerol + (9Z)-octadecenoate + H(+)</text>
        <dbReference type="Rhea" id="RHEA:38647"/>
        <dbReference type="ChEBI" id="CHEBI:15377"/>
        <dbReference type="ChEBI" id="CHEBI:15378"/>
        <dbReference type="ChEBI" id="CHEBI:30823"/>
        <dbReference type="ChEBI" id="CHEBI:75847"/>
        <dbReference type="ChEBI" id="CHEBI:75868"/>
    </reaction>
    <physiologicalReaction direction="left-to-right" evidence="24">
        <dbReference type="Rhea" id="RHEA:38648"/>
    </physiologicalReaction>
</comment>
<comment type="catalytic activity">
    <reaction evidence="19">
        <text>1,2,3-tri-(9Z-octadecenoyl)-glycerol + H2O = 2,3-di-(9Z)-octadecenoyl-sn-glycerol + (9Z)-octadecenoate + H(+)</text>
        <dbReference type="Rhea" id="RHEA:38391"/>
        <dbReference type="ChEBI" id="CHEBI:15377"/>
        <dbReference type="ChEBI" id="CHEBI:15378"/>
        <dbReference type="ChEBI" id="CHEBI:30823"/>
        <dbReference type="ChEBI" id="CHEBI:53753"/>
        <dbReference type="ChEBI" id="CHEBI:75824"/>
    </reaction>
    <physiologicalReaction direction="left-to-right" evidence="24">
        <dbReference type="Rhea" id="RHEA:38392"/>
    </physiologicalReaction>
</comment>
<comment type="catalytic activity">
    <reaction evidence="19">
        <text>1,2,3-tri-(9Z)-hexadecenoylglycerol + H2O = 2,3-di-(9Z)-hexadecenoyl-sn-glycerol + (9Z)-hexadecenoate + H(+)</text>
        <dbReference type="Rhea" id="RHEA:38399"/>
        <dbReference type="ChEBI" id="CHEBI:15377"/>
        <dbReference type="ChEBI" id="CHEBI:15378"/>
        <dbReference type="ChEBI" id="CHEBI:32372"/>
        <dbReference type="ChEBI" id="CHEBI:75841"/>
        <dbReference type="ChEBI" id="CHEBI:75853"/>
    </reaction>
    <physiologicalReaction direction="left-to-right" evidence="24">
        <dbReference type="Rhea" id="RHEA:38400"/>
    </physiologicalReaction>
</comment>
<comment type="catalytic activity">
    <reaction evidence="19">
        <text>1,2,3-tri-(9Z,12Z)-octadecadienoylglycerol + H2O = 2,3-di-(9Z,12Z)-octadecadienoyl-sn-glycerol + (9Z,12Z)-octadecadienoate + H(+)</text>
        <dbReference type="Rhea" id="RHEA:38407"/>
        <dbReference type="ChEBI" id="CHEBI:15377"/>
        <dbReference type="ChEBI" id="CHEBI:15378"/>
        <dbReference type="ChEBI" id="CHEBI:30245"/>
        <dbReference type="ChEBI" id="CHEBI:75844"/>
        <dbReference type="ChEBI" id="CHEBI:75854"/>
    </reaction>
    <physiologicalReaction direction="left-to-right" evidence="24">
        <dbReference type="Rhea" id="RHEA:38408"/>
    </physiologicalReaction>
</comment>
<comment type="catalytic activity">
    <reaction evidence="19">
        <text>1,2,3-tri-(9Z,12Z,15Z)-octadecatrienoylglycerol + H2O = 2,3-di-(9Z,12Z,15Z)-octadecatrienoyl-sn-glycerol + (9Z,12Z,15Z)-octadecatrienoate + H(+)</text>
        <dbReference type="Rhea" id="RHEA:38415"/>
        <dbReference type="ChEBI" id="CHEBI:15377"/>
        <dbReference type="ChEBI" id="CHEBI:15378"/>
        <dbReference type="ChEBI" id="CHEBI:32387"/>
        <dbReference type="ChEBI" id="CHEBI:75845"/>
        <dbReference type="ChEBI" id="CHEBI:75855"/>
    </reaction>
    <physiologicalReaction direction="left-to-right" evidence="24">
        <dbReference type="Rhea" id="RHEA:38416"/>
    </physiologicalReaction>
</comment>
<comment type="catalytic activity">
    <reaction evidence="19">
        <text>1,3-di-(9Z)-octadecenoyl-2-hexadecanoylglycerol + H2O = 2-hexadecanoyl-3-(9Z)-octadecenoyl-sn-glycerol + (9Z)-octadecenoate + H(+)</text>
        <dbReference type="Rhea" id="RHEA:38431"/>
        <dbReference type="ChEBI" id="CHEBI:15377"/>
        <dbReference type="ChEBI" id="CHEBI:15378"/>
        <dbReference type="ChEBI" id="CHEBI:30823"/>
        <dbReference type="ChEBI" id="CHEBI:75846"/>
        <dbReference type="ChEBI" id="CHEBI:75870"/>
    </reaction>
    <physiologicalReaction direction="left-to-right" evidence="24">
        <dbReference type="Rhea" id="RHEA:38432"/>
    </physiologicalReaction>
</comment>
<comment type="catalytic activity">
    <reaction evidence="19">
        <text>1-hexadecanoyl-2,3-di-(9Z)-octadecenoyl-sn-glycerol + H2O = 2,3-di-(9Z)-octadecenoyl-sn-glycerol + hexadecanoate + H(+)</text>
        <dbReference type="Rhea" id="RHEA:38427"/>
        <dbReference type="ChEBI" id="CHEBI:7896"/>
        <dbReference type="ChEBI" id="CHEBI:15377"/>
        <dbReference type="ChEBI" id="CHEBI:15378"/>
        <dbReference type="ChEBI" id="CHEBI:75824"/>
        <dbReference type="ChEBI" id="CHEBI:75847"/>
    </reaction>
    <physiologicalReaction direction="left-to-right" evidence="24">
        <dbReference type="Rhea" id="RHEA:38428"/>
    </physiologicalReaction>
</comment>
<comment type="catalytic activity">
    <reaction evidence="19">
        <text>1,2-di-(9Z)-octadecenoyl-3-hexadecanoyl-sn-glycerol + H2O = 2-(9Z-octadecenoyl)-3-hexadecanoyl-sn-glycerol + (9Z)-octadecenoate + H(+)</text>
        <dbReference type="Rhea" id="RHEA:38643"/>
        <dbReference type="ChEBI" id="CHEBI:15377"/>
        <dbReference type="ChEBI" id="CHEBI:15378"/>
        <dbReference type="ChEBI" id="CHEBI:30823"/>
        <dbReference type="ChEBI" id="CHEBI:75546"/>
        <dbReference type="ChEBI" id="CHEBI:75583"/>
    </reaction>
    <physiologicalReaction direction="left-to-right" evidence="24">
        <dbReference type="Rhea" id="RHEA:38644"/>
    </physiologicalReaction>
</comment>
<comment type="catalytic activity">
    <reaction evidence="1">
        <text>1,2-di-(9Z-octadecenoyl)-glycerol + (9Z)-octadecenoate + H(+) = 1,2,3-tri-(9Z-octadecenoyl)-glycerol + H2O</text>
        <dbReference type="Rhea" id="RHEA:38379"/>
        <dbReference type="ChEBI" id="CHEBI:15377"/>
        <dbReference type="ChEBI" id="CHEBI:15378"/>
        <dbReference type="ChEBI" id="CHEBI:30823"/>
        <dbReference type="ChEBI" id="CHEBI:52323"/>
        <dbReference type="ChEBI" id="CHEBI:53753"/>
    </reaction>
    <physiologicalReaction direction="right-to-left" evidence="1">
        <dbReference type="Rhea" id="RHEA:38381"/>
    </physiologicalReaction>
</comment>
<comment type="catalytic activity">
    <reaction evidence="1">
        <text>a 1-acylglycerol + a 1,3-diacylglycerol = a triacylglycerol + glycerol</text>
        <dbReference type="Rhea" id="RHEA:44440"/>
        <dbReference type="ChEBI" id="CHEBI:17754"/>
        <dbReference type="ChEBI" id="CHEBI:17855"/>
        <dbReference type="ChEBI" id="CHEBI:35759"/>
        <dbReference type="ChEBI" id="CHEBI:47777"/>
    </reaction>
    <physiologicalReaction direction="left-to-right" evidence="1">
        <dbReference type="Rhea" id="RHEA:44441"/>
    </physiologicalReaction>
</comment>
<comment type="catalytic activity">
    <reaction evidence="1">
        <text>a 1-acylglycerol + a 1,2-diacylglycerol = a triacylglycerol + glycerol</text>
        <dbReference type="Rhea" id="RHEA:44436"/>
        <dbReference type="ChEBI" id="CHEBI:17754"/>
        <dbReference type="ChEBI" id="CHEBI:17855"/>
        <dbReference type="ChEBI" id="CHEBI:35759"/>
        <dbReference type="ChEBI" id="CHEBI:49172"/>
    </reaction>
    <physiologicalReaction direction="left-to-right" evidence="1">
        <dbReference type="Rhea" id="RHEA:44437"/>
    </physiologicalReaction>
</comment>
<comment type="catalytic activity">
    <reaction evidence="1">
        <text>2 a 1-acylglycerol = a 1,2-diacylglycerol + glycerol</text>
        <dbReference type="Rhea" id="RHEA:44432"/>
        <dbReference type="ChEBI" id="CHEBI:17754"/>
        <dbReference type="ChEBI" id="CHEBI:35759"/>
        <dbReference type="ChEBI" id="CHEBI:49172"/>
    </reaction>
    <physiologicalReaction direction="left-to-right" evidence="1">
        <dbReference type="Rhea" id="RHEA:44433"/>
    </physiologicalReaction>
</comment>
<comment type="catalytic activity">
    <reaction evidence="1">
        <text>a triacylglycerol + all-trans-retinol = an all-trans-retinyl ester + a diacylglycerol</text>
        <dbReference type="Rhea" id="RHEA:44676"/>
        <dbReference type="ChEBI" id="CHEBI:17336"/>
        <dbReference type="ChEBI" id="CHEBI:17855"/>
        <dbReference type="ChEBI" id="CHEBI:18035"/>
        <dbReference type="ChEBI" id="CHEBI:63410"/>
    </reaction>
    <physiologicalReaction direction="left-to-right" evidence="1">
        <dbReference type="Rhea" id="RHEA:44677"/>
    </physiologicalReaction>
</comment>
<comment type="catalytic activity">
    <reaction evidence="1">
        <text>1-(9Z-octadecenoyl)-glycerol + 1,3-di-(9Z-octadecenoyl)-glycerol = 1,2,3-tri-(9Z-octadecenoyl)-glycerol + glycerol</text>
        <dbReference type="Rhea" id="RHEA:38331"/>
        <dbReference type="ChEBI" id="CHEBI:17754"/>
        <dbReference type="ChEBI" id="CHEBI:53753"/>
        <dbReference type="ChEBI" id="CHEBI:75342"/>
        <dbReference type="ChEBI" id="CHEBI:75735"/>
    </reaction>
    <physiologicalReaction direction="left-to-right" evidence="1">
        <dbReference type="Rhea" id="RHEA:38332"/>
    </physiologicalReaction>
</comment>
<comment type="catalytic activity">
    <reaction evidence="1">
        <text>1-(9Z-octadecenoyl)-glycerol + 1,2-di-(9Z-octadecenoyl)-glycerol = 1,2,3-tri-(9Z-octadecenoyl)-glycerol + glycerol</text>
        <dbReference type="Rhea" id="RHEA:38327"/>
        <dbReference type="ChEBI" id="CHEBI:17754"/>
        <dbReference type="ChEBI" id="CHEBI:52323"/>
        <dbReference type="ChEBI" id="CHEBI:53753"/>
        <dbReference type="ChEBI" id="CHEBI:75342"/>
    </reaction>
    <physiologicalReaction direction="left-to-right" evidence="1">
        <dbReference type="Rhea" id="RHEA:38328"/>
    </physiologicalReaction>
</comment>
<comment type="catalytic activity">
    <reaction evidence="1">
        <text>2 1-(9Z-octadecenoyl)-glycerol = 1,2-di-(9Z-octadecenoyl)-glycerol + glycerol</text>
        <dbReference type="Rhea" id="RHEA:38323"/>
        <dbReference type="ChEBI" id="CHEBI:17754"/>
        <dbReference type="ChEBI" id="CHEBI:52323"/>
        <dbReference type="ChEBI" id="CHEBI:75342"/>
    </reaction>
    <physiologicalReaction direction="left-to-right" evidence="1">
        <dbReference type="Rhea" id="RHEA:38324"/>
    </physiologicalReaction>
</comment>
<comment type="catalytic activity">
    <reaction evidence="1">
        <text>1,2,3-tri-(9Z-octadecenoyl)-glycerol + all-trans-retinol = all-trans-retinyl 9Z-octadecenoate + di-(9Z)-octadecenoylglycerol</text>
        <dbReference type="Rhea" id="RHEA:39987"/>
        <dbReference type="ChEBI" id="CHEBI:17336"/>
        <dbReference type="ChEBI" id="CHEBI:53753"/>
        <dbReference type="ChEBI" id="CHEBI:70760"/>
        <dbReference type="ChEBI" id="CHEBI:75945"/>
    </reaction>
    <physiologicalReaction direction="left-to-right" evidence="1">
        <dbReference type="Rhea" id="RHEA:39988"/>
    </physiologicalReaction>
</comment>
<comment type="catalytic activity">
    <reaction evidence="1">
        <text>a 1,2-diacyl-sn-glycero-3-phosphocholine + H2O = a 1-acyl-sn-glycero-3-phosphocholine + a fatty acid + H(+)</text>
        <dbReference type="Rhea" id="RHEA:15801"/>
        <dbReference type="ChEBI" id="CHEBI:15377"/>
        <dbReference type="ChEBI" id="CHEBI:15378"/>
        <dbReference type="ChEBI" id="CHEBI:28868"/>
        <dbReference type="ChEBI" id="CHEBI:57643"/>
        <dbReference type="ChEBI" id="CHEBI:58168"/>
        <dbReference type="EC" id="3.1.1.4"/>
    </reaction>
    <physiologicalReaction direction="left-to-right" evidence="1">
        <dbReference type="Rhea" id="RHEA:15802"/>
    </physiologicalReaction>
</comment>
<comment type="catalytic activity">
    <reaction evidence="20">
        <text>1,2,3-tri-(9Z-octadecenoyl)-glycerol + 9-hydroxy-octadecanoate = 9-(9Z-octadecenoyloxy)-octadecanoate + 2,3-di-(9Z)-octadecenoyl-sn-glycerol</text>
        <dbReference type="Rhea" id="RHEA:75011"/>
        <dbReference type="ChEBI" id="CHEBI:53753"/>
        <dbReference type="ChEBI" id="CHEBI:75824"/>
        <dbReference type="ChEBI" id="CHEBI:136282"/>
        <dbReference type="ChEBI" id="CHEBI:136286"/>
    </reaction>
</comment>
<comment type="catalytic activity">
    <reaction evidence="20">
        <text>1-hexadecanoyl-2,3-di-(9Z)-octadecenoyl-sn-glycerol + 9-hydroxy-octadecanoate = 9-hexadecanoyloxy-octadecanoate + 2,3-di-(9Z)-octadecenoyl-sn-glycerol</text>
        <dbReference type="Rhea" id="RHEA:75015"/>
        <dbReference type="ChEBI" id="CHEBI:75824"/>
        <dbReference type="ChEBI" id="CHEBI:75847"/>
        <dbReference type="ChEBI" id="CHEBI:83670"/>
        <dbReference type="ChEBI" id="CHEBI:136286"/>
    </reaction>
</comment>
<comment type="catalytic activity">
    <reaction evidence="20">
        <text>1,2,3-tri-(10Z)-heptadecenoylglycerol + 9-hydroxy-octadecanoate = 2,3-di-(10Z-heptadecenoyl)-sn-glycerol + 9-(10Z-heptadecenoyloxy)-octadecanoate</text>
        <dbReference type="Rhea" id="RHEA:75019"/>
        <dbReference type="ChEBI" id="CHEBI:136286"/>
        <dbReference type="ChEBI" id="CHEBI:194143"/>
        <dbReference type="ChEBI" id="CHEBI:194145"/>
        <dbReference type="ChEBI" id="CHEBI:228204"/>
    </reaction>
</comment>
<comment type="catalytic activity">
    <reaction evidence="20">
        <text>1,2,3-tri-(9Z,12Z)-octadecadienoylglycerol + 9-hydroxy-octadecanoate = 2,3-di-(9Z,12Z)-octadecadienoyl-sn-glycerol + 9-(9Z,12Z-octadecadienoyloxy)-octadecanoate</text>
        <dbReference type="Rhea" id="RHEA:75023"/>
        <dbReference type="ChEBI" id="CHEBI:75844"/>
        <dbReference type="ChEBI" id="CHEBI:75854"/>
        <dbReference type="ChEBI" id="CHEBI:136286"/>
        <dbReference type="ChEBI" id="CHEBI:194142"/>
    </reaction>
</comment>
<comment type="catalytic activity">
    <reaction evidence="20">
        <text>1,2,3-tri-(9Z)-hexadecenoylglycerol + 9-hydroxy-octadecanoate = 2,3-di-(9Z)-hexadecenoyl-sn-glycerol + 9-(9Z-hexadecenoyloxy)-octadecanoate</text>
        <dbReference type="Rhea" id="RHEA:75027"/>
        <dbReference type="ChEBI" id="CHEBI:75841"/>
        <dbReference type="ChEBI" id="CHEBI:75853"/>
        <dbReference type="ChEBI" id="CHEBI:136286"/>
        <dbReference type="ChEBI" id="CHEBI:136309"/>
    </reaction>
</comment>
<comment type="catalytic activity">
    <reaction evidence="20">
        <text>9-hydroxy-octadecanoate + 1,2-di-(9Z-octadecenoyl)-sn-glycerol = 9-(9Z-octadecenoyloxy)-octadecanoate + 2-(9Z-octadecenoyl)-glycerol</text>
        <dbReference type="Rhea" id="RHEA:75031"/>
        <dbReference type="ChEBI" id="CHEBI:52333"/>
        <dbReference type="ChEBI" id="CHEBI:73990"/>
        <dbReference type="ChEBI" id="CHEBI:136282"/>
        <dbReference type="ChEBI" id="CHEBI:136286"/>
    </reaction>
</comment>
<comment type="catalytic activity">
    <reaction evidence="20">
        <text>1-hexadecanoyl-2,3-di-(9Z)-octadecenoyl-sn-glycerol + 9-hydroxy-octadecanoate = 1-hexadecanoyl-3-(9Z)-octadecenoyl-sn-glycerol + 9-(9Z-octadecenoyloxy)-octadecanoate</text>
        <dbReference type="Rhea" id="RHEA:75035"/>
        <dbReference type="ChEBI" id="CHEBI:75847"/>
        <dbReference type="ChEBI" id="CHEBI:75868"/>
        <dbReference type="ChEBI" id="CHEBI:136282"/>
        <dbReference type="ChEBI" id="CHEBI:136286"/>
    </reaction>
</comment>
<comment type="activity regulation">
    <text evidence="6 13 14">Stimulated by PKA-dependent PLIN phosphorylation.</text>
</comment>
<comment type="pathway">
    <text>Glycerolipid metabolism; triacylglycerol degradation.</text>
</comment>
<comment type="subunit">
    <text evidence="1 11 15 16 17">Interacts with ABHD5; this association stimulates PNPLA2 triglyceride hydrolase activity (PubMed:16679289, PubMed:17189257). Interacts with SERPINF1; this interaction stimulates the phospholipase A2 activity of PNPLA2 (By similarity). Despite a colocalization in lipid droplets, it probably does not interact with PLIN (PubMed:17189257). Interacts with PLIN5; prevents interaction with ABHD5 (PubMed:21148142, PubMed:21393244). Interacts with FAF2 (By similarity).</text>
</comment>
<comment type="subcellular location">
    <subcellularLocation>
        <location evidence="6 12">Lipid droplet</location>
    </subcellularLocation>
    <subcellularLocation>
        <location evidence="1">Cell membrane</location>
        <topology evidence="2">Multi-pass membrane protein</topology>
    </subcellularLocation>
    <subcellularLocation>
        <location evidence="5">Cytoplasm</location>
    </subcellularLocation>
</comment>
<comment type="alternative products">
    <event type="alternative splicing"/>
    <isoform>
        <id>Q8BJ56-1</id>
        <name>1</name>
        <sequence type="displayed"/>
    </isoform>
    <isoform>
        <id>Q8BJ56-2</id>
        <name>2</name>
        <sequence type="described" ref="VSP_026424"/>
    </isoform>
    <isoform>
        <id>Q8BJ56-3</id>
        <name>3</name>
        <sequence type="described" ref="VSP_026422 VSP_026423"/>
    </isoform>
</comment>
<comment type="tissue specificity">
    <text evidence="5 6 8 12">Expressed at high levels in white and brown adipose tissue, and to a lesser degree in testis and cardiac muscle. Barely detected in liver, spleen, thymus, kidney, skeletal muscle, and brain. Among the white adipose depots, gonadal fat showed the highest level of expression compared with inguinal and renal white adipose tissues.</text>
</comment>
<comment type="developmental stage">
    <text evidence="5 6 8 12">Increased expression when preadipocytes are induced to differentiate to adipocytes. Not detected in proliferating or confluent preadipocytes.</text>
</comment>
<comment type="induction">
    <text evidence="5 7 8 9 12">Transiently induced during fasting. cAMP and glucagon may not be involved in the induction during fasting. Induced by dexamethasone. Down-regulated by insulin, isoprotenerol and TNF-alfa. Expression is not affected by glucose and by growth hormone. Expression is reduced in fasted leptin deficient mouse (ob/ob), an obese mouse model. Expression is not affected in fed ob/ob mouse.</text>
</comment>
<comment type="PTM">
    <text evidence="6 18">Phosphorylation at Ser-406 by PKA is increased during fasting and moderate intensity exercise, and moderately increases lipolytic activity.</text>
</comment>
<comment type="PTM">
    <text evidence="1">Ubiquitinated by PEX2 in response to reactive oxygen species (ROS), leading to its degradation (By similarity). Ubiquitination is stimulated by LDAH (By similarity).</text>
</comment>
<comment type="disruption phenotype">
    <text evidence="10 20">Mice show increased adipose mass and triacylglycerol deposition in multiple tissues. They accumulate large amounts of lipid in the heart, causing cardiac dysfunction and premature death (PubMed:16675698). Conditional knockout in adipose cells results in a marked reduction in the levels and biosynthesis of fatty acid esters of hydroxy fatty acids (FAHFAs) and FAHFA-TGs (PubMed:35676490).</text>
</comment>
<comment type="sequence caution" evidence="23">
    <conflict type="frameshift">
        <sequence resource="EMBL-CDS" id="BAB22643"/>
    </conflict>
</comment>
<sequence length="486" mass="53657">MFPRETKWNISFAGCGFLGVYHIGVASCLREHAPFLVANATHIYGASAGALTATALVTGACLGEAGANIIEVSKEARKRFLGPLHPSFNLVKTIRGCLLKTLPADCHERANGRLGISLTRVSDGENVIISHFSSKDELIQANVCSTFIPVYCGLIPPTLQGVRYVDGGISDNLPLYELKNTITVSPFSGESDICPQDSSTNIHELRVTNTSIQFNLRNLYRLSKALFPPEPMVLREMCKQGYRDGLRFLRRNGLLNQPNPLLALPPVVPQEEDAEEAAVVEERAGEEDQLQPYRKDRILEHLPARLNEALLEACVEPKDLMTTLSNMLPVRLATAMMVPYTLPLESAVSFTIRLLEWLPDVPEDIRWMKEQTGSICQYLVMRAKRKLGDHLPSRLSEQVELRRAQSLPSVPLSCATYSEALPNWVRNNLSLGDALAKWEECQRQLLLGLFCTNVAFPPDALRMRAPASPTAADPATPQDPPGLPPC</sequence>
<protein>
    <recommendedName>
        <fullName evidence="23">Patatin-like phospholipase domain-containing protein 2</fullName>
        <ecNumber evidence="5 6 8 10 11 13 19">3.1.1.3</ecNumber>
    </recommendedName>
    <alternativeName>
        <fullName>Adipose triglyceride lipase</fullName>
    </alternativeName>
    <alternativeName>
        <fullName evidence="1">Calcium-independent phospholipase A2-zeta</fullName>
        <shortName evidence="1">iPLA2-zeta</shortName>
        <ecNumber evidence="1">3.1.1.4</ecNumber>
    </alternativeName>
    <alternativeName>
        <fullName>Desnutrin</fullName>
    </alternativeName>
</protein>
<evidence type="ECO:0000250" key="1">
    <source>
        <dbReference type="UniProtKB" id="Q96AD5"/>
    </source>
</evidence>
<evidence type="ECO:0000255" key="2"/>
<evidence type="ECO:0000255" key="3">
    <source>
        <dbReference type="PROSITE-ProRule" id="PRU01161"/>
    </source>
</evidence>
<evidence type="ECO:0000256" key="4">
    <source>
        <dbReference type="SAM" id="MobiDB-lite"/>
    </source>
</evidence>
<evidence type="ECO:0000269" key="5">
    <source>
    </source>
</evidence>
<evidence type="ECO:0000269" key="6">
    <source>
    </source>
</evidence>
<evidence type="ECO:0000269" key="7">
    <source>
    </source>
</evidence>
<evidence type="ECO:0000269" key="8">
    <source>
    </source>
</evidence>
<evidence type="ECO:0000269" key="9">
    <source>
    </source>
</evidence>
<evidence type="ECO:0000269" key="10">
    <source>
    </source>
</evidence>
<evidence type="ECO:0000269" key="11">
    <source>
    </source>
</evidence>
<evidence type="ECO:0000269" key="12">
    <source>
    </source>
</evidence>
<evidence type="ECO:0000269" key="13">
    <source>
    </source>
</evidence>
<evidence type="ECO:0000269" key="14">
    <source>
    </source>
</evidence>
<evidence type="ECO:0000269" key="15">
    <source>
    </source>
</evidence>
<evidence type="ECO:0000269" key="16">
    <source>
    </source>
</evidence>
<evidence type="ECO:0000269" key="17">
    <source>
    </source>
</evidence>
<evidence type="ECO:0000269" key="18">
    <source>
    </source>
</evidence>
<evidence type="ECO:0000269" key="19">
    <source>
    </source>
</evidence>
<evidence type="ECO:0000269" key="20">
    <source>
    </source>
</evidence>
<evidence type="ECO:0000303" key="21">
    <source>
    </source>
</evidence>
<evidence type="ECO:0000303" key="22">
    <source>
    </source>
</evidence>
<evidence type="ECO:0000305" key="23"/>
<evidence type="ECO:0000305" key="24">
    <source>
    </source>
</evidence>
<evidence type="ECO:0000312" key="25">
    <source>
        <dbReference type="MGI" id="MGI:1914103"/>
    </source>
</evidence>
<evidence type="ECO:0007744" key="26">
    <source>
    </source>
</evidence>
<organism>
    <name type="scientific">Mus musculus</name>
    <name type="common">Mouse</name>
    <dbReference type="NCBI Taxonomy" id="10090"/>
    <lineage>
        <taxon>Eukaryota</taxon>
        <taxon>Metazoa</taxon>
        <taxon>Chordata</taxon>
        <taxon>Craniata</taxon>
        <taxon>Vertebrata</taxon>
        <taxon>Euteleostomi</taxon>
        <taxon>Mammalia</taxon>
        <taxon>Eutheria</taxon>
        <taxon>Euarchontoglires</taxon>
        <taxon>Glires</taxon>
        <taxon>Rodentia</taxon>
        <taxon>Myomorpha</taxon>
        <taxon>Muroidea</taxon>
        <taxon>Muridae</taxon>
        <taxon>Murinae</taxon>
        <taxon>Mus</taxon>
        <taxon>Mus</taxon>
    </lineage>
</organism>
<dbReference type="EC" id="3.1.1.3" evidence="5 6 8 10 11 13 19"/>
<dbReference type="EC" id="3.1.1.4" evidence="1"/>
<dbReference type="EMBL" id="AY731699">
    <property type="protein sequence ID" value="AAU33824.1"/>
    <property type="molecule type" value="mRNA"/>
</dbReference>
<dbReference type="EMBL" id="AY894805">
    <property type="protein sequence ID" value="AAW81963.1"/>
    <property type="molecule type" value="mRNA"/>
</dbReference>
<dbReference type="EMBL" id="AY510273">
    <property type="protein sequence ID" value="AAS48458.1"/>
    <property type="molecule type" value="mRNA"/>
</dbReference>
<dbReference type="EMBL" id="AK002826">
    <property type="protein sequence ID" value="BAB22387.1"/>
    <property type="molecule type" value="mRNA"/>
</dbReference>
<dbReference type="EMBL" id="AK003207">
    <property type="protein sequence ID" value="BAB22643.1"/>
    <property type="status" value="ALT_FRAME"/>
    <property type="molecule type" value="mRNA"/>
</dbReference>
<dbReference type="EMBL" id="AK031609">
    <property type="protein sequence ID" value="BAC27476.1"/>
    <property type="molecule type" value="mRNA"/>
</dbReference>
<dbReference type="EMBL" id="AK150184">
    <property type="protein sequence ID" value="BAE29364.1"/>
    <property type="molecule type" value="mRNA"/>
</dbReference>
<dbReference type="EMBL" id="BC019188">
    <property type="protein sequence ID" value="AAH19188.1"/>
    <property type="molecule type" value="mRNA"/>
</dbReference>
<dbReference type="EMBL" id="BC044781">
    <property type="protein sequence ID" value="AAH44781.1"/>
    <property type="molecule type" value="mRNA"/>
</dbReference>
<dbReference type="EMBL" id="BC064747">
    <property type="protein sequence ID" value="AAH64747.1"/>
    <property type="molecule type" value="mRNA"/>
</dbReference>
<dbReference type="EMBL" id="U89431">
    <property type="protein sequence ID" value="AAC36536.1"/>
    <property type="molecule type" value="mRNA"/>
</dbReference>
<dbReference type="CCDS" id="CCDS22015.1">
    <molecule id="Q8BJ56-2"/>
</dbReference>
<dbReference type="CCDS" id="CCDS52445.1">
    <molecule id="Q8BJ56-1"/>
</dbReference>
<dbReference type="RefSeq" id="NP_001157161.1">
    <molecule id="Q8BJ56-1"/>
    <property type="nucleotide sequence ID" value="NM_001163689.1"/>
</dbReference>
<dbReference type="RefSeq" id="NP_080078.2">
    <molecule id="Q8BJ56-2"/>
    <property type="nucleotide sequence ID" value="NM_025802.3"/>
</dbReference>
<dbReference type="SMR" id="Q8BJ56"/>
<dbReference type="BioGRID" id="211763">
    <property type="interactions" value="6"/>
</dbReference>
<dbReference type="DIP" id="DIP-61641N"/>
<dbReference type="FunCoup" id="Q8BJ56">
    <property type="interactions" value="1028"/>
</dbReference>
<dbReference type="IntAct" id="Q8BJ56">
    <property type="interactions" value="2"/>
</dbReference>
<dbReference type="STRING" id="10090.ENSMUSP00000127149"/>
<dbReference type="BindingDB" id="Q8BJ56"/>
<dbReference type="ChEMBL" id="CHEMBL3425391"/>
<dbReference type="SwissLipids" id="SLP:000000317"/>
<dbReference type="GlyCosmos" id="Q8BJ56">
    <property type="glycosylation" value="1 site, No reported glycans"/>
</dbReference>
<dbReference type="GlyGen" id="Q8BJ56">
    <property type="glycosylation" value="4 sites, 2 N-linked glycans (2 sites)"/>
</dbReference>
<dbReference type="iPTMnet" id="Q8BJ56"/>
<dbReference type="PhosphoSitePlus" id="Q8BJ56"/>
<dbReference type="SwissPalm" id="Q8BJ56"/>
<dbReference type="jPOST" id="Q8BJ56"/>
<dbReference type="PaxDb" id="10090-ENSMUSP00000127149"/>
<dbReference type="PeptideAtlas" id="Q8BJ56"/>
<dbReference type="ProteomicsDB" id="289932">
    <molecule id="Q8BJ56-1"/>
</dbReference>
<dbReference type="ProteomicsDB" id="289933">
    <molecule id="Q8BJ56-2"/>
</dbReference>
<dbReference type="ProteomicsDB" id="289934">
    <molecule id="Q8BJ56-3"/>
</dbReference>
<dbReference type="Pumba" id="Q8BJ56"/>
<dbReference type="Antibodypedia" id="22689">
    <property type="antibodies" value="529 antibodies from 38 providers"/>
</dbReference>
<dbReference type="Ensembl" id="ENSMUST00000064151.13">
    <molecule id="Q8BJ56-2"/>
    <property type="protein sequence ID" value="ENSMUSP00000065116.7"/>
    <property type="gene ID" value="ENSMUSG00000025509.16"/>
</dbReference>
<dbReference type="Ensembl" id="ENSMUST00000164016.8">
    <molecule id="Q8BJ56-1"/>
    <property type="protein sequence ID" value="ENSMUSP00000127149.2"/>
    <property type="gene ID" value="ENSMUSG00000025509.16"/>
</dbReference>
<dbReference type="GeneID" id="66853"/>
<dbReference type="KEGG" id="mmu:66853"/>
<dbReference type="UCSC" id="uc009klg.2">
    <molecule id="Q8BJ56-2"/>
    <property type="organism name" value="mouse"/>
</dbReference>
<dbReference type="UCSC" id="uc009klh.2">
    <molecule id="Q8BJ56-3"/>
    <property type="organism name" value="mouse"/>
</dbReference>
<dbReference type="UCSC" id="uc009kli.2">
    <molecule id="Q8BJ56-1"/>
    <property type="organism name" value="mouse"/>
</dbReference>
<dbReference type="AGR" id="MGI:1914103"/>
<dbReference type="CTD" id="57104"/>
<dbReference type="MGI" id="MGI:1914103">
    <property type="gene designation" value="Pnpla2"/>
</dbReference>
<dbReference type="VEuPathDB" id="HostDB:ENSMUSG00000025509"/>
<dbReference type="eggNOG" id="KOG3773">
    <property type="taxonomic scope" value="Eukaryota"/>
</dbReference>
<dbReference type="GeneTree" id="ENSGT00940000160155"/>
<dbReference type="HOGENOM" id="CLU_018371_0_1_1"/>
<dbReference type="InParanoid" id="Q8BJ56"/>
<dbReference type="OMA" id="FPREATW"/>
<dbReference type="OrthoDB" id="197155at2759"/>
<dbReference type="PhylomeDB" id="Q8BJ56"/>
<dbReference type="TreeFam" id="TF314272"/>
<dbReference type="BRENDA" id="3.1.1.3">
    <property type="organism ID" value="3474"/>
</dbReference>
<dbReference type="Reactome" id="R-MMU-1482883">
    <property type="pathway name" value="Acyl chain remodeling of DAG and TAG"/>
</dbReference>
<dbReference type="Reactome" id="R-MMU-381426">
    <property type="pathway name" value="Regulation of Insulin-like Growth Factor (IGF) transport and uptake by Insulin-like Growth Factor Binding Proteins (IGFBPs)"/>
</dbReference>
<dbReference type="Reactome" id="R-MMU-8957275">
    <property type="pathway name" value="Post-translational protein phosphorylation"/>
</dbReference>
<dbReference type="UniPathway" id="UPA00256"/>
<dbReference type="BioGRID-ORCS" id="66853">
    <property type="hits" value="3 hits in 79 CRISPR screens"/>
</dbReference>
<dbReference type="ChiTaRS" id="Pnpla2">
    <property type="organism name" value="mouse"/>
</dbReference>
<dbReference type="PRO" id="PR:Q8BJ56"/>
<dbReference type="Proteomes" id="UP000000589">
    <property type="component" value="Chromosome 7"/>
</dbReference>
<dbReference type="RNAct" id="Q8BJ56">
    <property type="molecule type" value="protein"/>
</dbReference>
<dbReference type="Bgee" id="ENSMUSG00000025509">
    <property type="expression patterns" value="Expressed in thoracic mammary gland and 245 other cell types or tissues"/>
</dbReference>
<dbReference type="ExpressionAtlas" id="Q8BJ56">
    <property type="expression patterns" value="baseline and differential"/>
</dbReference>
<dbReference type="GO" id="GO:0005737">
    <property type="term" value="C:cytoplasm"/>
    <property type="evidence" value="ECO:0000314"/>
    <property type="project" value="UniProtKB"/>
</dbReference>
<dbReference type="GO" id="GO:0005829">
    <property type="term" value="C:cytosol"/>
    <property type="evidence" value="ECO:0000314"/>
    <property type="project" value="MGI"/>
</dbReference>
<dbReference type="GO" id="GO:0005811">
    <property type="term" value="C:lipid droplet"/>
    <property type="evidence" value="ECO:0000314"/>
    <property type="project" value="UniProtKB"/>
</dbReference>
<dbReference type="GO" id="GO:0005654">
    <property type="term" value="C:nucleoplasm"/>
    <property type="evidence" value="ECO:0007669"/>
    <property type="project" value="Ensembl"/>
</dbReference>
<dbReference type="GO" id="GO:0005886">
    <property type="term" value="C:plasma membrane"/>
    <property type="evidence" value="ECO:0007669"/>
    <property type="project" value="UniProtKB-SubCell"/>
</dbReference>
<dbReference type="GO" id="GO:0051265">
    <property type="term" value="F:diolein transacylation activity"/>
    <property type="evidence" value="ECO:0000250"/>
    <property type="project" value="UniProtKB"/>
</dbReference>
<dbReference type="GO" id="GO:0051264">
    <property type="term" value="F:mono-olein transacylation activity"/>
    <property type="evidence" value="ECO:0000250"/>
    <property type="project" value="UniProtKB"/>
</dbReference>
<dbReference type="GO" id="GO:0004623">
    <property type="term" value="F:phospholipase A2 activity"/>
    <property type="evidence" value="ECO:0000250"/>
    <property type="project" value="UniProtKB"/>
</dbReference>
<dbReference type="GO" id="GO:0050253">
    <property type="term" value="F:retinyl-palmitate esterase activity"/>
    <property type="evidence" value="ECO:0000314"/>
    <property type="project" value="MGI"/>
</dbReference>
<dbReference type="GO" id="GO:0004806">
    <property type="term" value="F:triacylglycerol lipase activity"/>
    <property type="evidence" value="ECO:0000314"/>
    <property type="project" value="UniProtKB"/>
</dbReference>
<dbReference type="GO" id="GO:0006651">
    <property type="term" value="P:diacylglycerol biosynthetic process"/>
    <property type="evidence" value="ECO:0000314"/>
    <property type="project" value="UniProtKB"/>
</dbReference>
<dbReference type="GO" id="GO:0035356">
    <property type="term" value="P:intracellular triglyceride homeostasis"/>
    <property type="evidence" value="ECO:0000250"/>
    <property type="project" value="UniProtKB"/>
</dbReference>
<dbReference type="GO" id="GO:0016042">
    <property type="term" value="P:lipid catabolic process"/>
    <property type="evidence" value="ECO:0000315"/>
    <property type="project" value="MGI"/>
</dbReference>
<dbReference type="GO" id="GO:1905691">
    <property type="term" value="P:lipid droplet disassembly"/>
    <property type="evidence" value="ECO:0007669"/>
    <property type="project" value="Ensembl"/>
</dbReference>
<dbReference type="GO" id="GO:0160077">
    <property type="term" value="P:lipid droplet fusion"/>
    <property type="evidence" value="ECO:0000250"/>
    <property type="project" value="UniProtKB"/>
</dbReference>
<dbReference type="GO" id="GO:0034389">
    <property type="term" value="P:lipid droplet organization"/>
    <property type="evidence" value="ECO:0000315"/>
    <property type="project" value="MGI"/>
</dbReference>
<dbReference type="GO" id="GO:0019915">
    <property type="term" value="P:lipid storage"/>
    <property type="evidence" value="ECO:0000315"/>
    <property type="project" value="UniProtKB"/>
</dbReference>
<dbReference type="GO" id="GO:0010891">
    <property type="term" value="P:negative regulation of triglyceride storage"/>
    <property type="evidence" value="ECO:0000314"/>
    <property type="project" value="UniProtKB"/>
</dbReference>
<dbReference type="GO" id="GO:0007603">
    <property type="term" value="P:phototransduction, visible light"/>
    <property type="evidence" value="ECO:0000315"/>
    <property type="project" value="MGI"/>
</dbReference>
<dbReference type="GO" id="GO:0010898">
    <property type="term" value="P:positive regulation of triglyceride catabolic process"/>
    <property type="evidence" value="ECO:0000314"/>
    <property type="project" value="UniProtKB"/>
</dbReference>
<dbReference type="GO" id="GO:0001523">
    <property type="term" value="P:retinoid metabolic process"/>
    <property type="evidence" value="ECO:0000315"/>
    <property type="project" value="MGI"/>
</dbReference>
<dbReference type="GO" id="GO:0019433">
    <property type="term" value="P:triglyceride catabolic process"/>
    <property type="evidence" value="ECO:0000314"/>
    <property type="project" value="UniProtKB"/>
</dbReference>
<dbReference type="CDD" id="cd07220">
    <property type="entry name" value="Pat_PNPLA2"/>
    <property type="match status" value="1"/>
</dbReference>
<dbReference type="FunFam" id="3.40.1090.10:FF:000021">
    <property type="entry name" value="Patatin-like phospholipase domain containing 2"/>
    <property type="match status" value="1"/>
</dbReference>
<dbReference type="FunFam" id="3.40.1090.10:FF:000003">
    <property type="entry name" value="Patatin-like phospholipase domain-containing protein 2"/>
    <property type="match status" value="1"/>
</dbReference>
<dbReference type="Gene3D" id="3.40.1090.10">
    <property type="entry name" value="Cytosolic phospholipase A2 catalytic domain"/>
    <property type="match status" value="1"/>
</dbReference>
<dbReference type="InterPro" id="IPR016035">
    <property type="entry name" value="Acyl_Trfase/lysoPLipase"/>
</dbReference>
<dbReference type="InterPro" id="IPR033562">
    <property type="entry name" value="PLPL"/>
</dbReference>
<dbReference type="InterPro" id="IPR033903">
    <property type="entry name" value="PNPLA2"/>
</dbReference>
<dbReference type="InterPro" id="IPR002641">
    <property type="entry name" value="PNPLA_dom"/>
</dbReference>
<dbReference type="PANTHER" id="PTHR12406">
    <property type="entry name" value="CALCIUM-INDEPENDENT PHOSPHOLIPASE A2 IPLA2 -RELATED"/>
    <property type="match status" value="1"/>
</dbReference>
<dbReference type="PANTHER" id="PTHR12406:SF29">
    <property type="entry name" value="PATATIN-LIKE PHOSPHOLIPASE DOMAIN-CONTAINING PROTEIN 2"/>
    <property type="match status" value="1"/>
</dbReference>
<dbReference type="Pfam" id="PF01734">
    <property type="entry name" value="Patatin"/>
    <property type="match status" value="1"/>
</dbReference>
<dbReference type="SUPFAM" id="SSF52151">
    <property type="entry name" value="FabD/lysophospholipase-like"/>
    <property type="match status" value="1"/>
</dbReference>
<dbReference type="PROSITE" id="PS51635">
    <property type="entry name" value="PNPLA"/>
    <property type="match status" value="1"/>
</dbReference>
<keyword id="KW-0025">Alternative splicing</keyword>
<keyword id="KW-1003">Cell membrane</keyword>
<keyword id="KW-0963">Cytoplasm</keyword>
<keyword id="KW-0325">Glycoprotein</keyword>
<keyword id="KW-0378">Hydrolase</keyword>
<keyword id="KW-1017">Isopeptide bond</keyword>
<keyword id="KW-0442">Lipid degradation</keyword>
<keyword id="KW-0551">Lipid droplet</keyword>
<keyword id="KW-0443">Lipid metabolism</keyword>
<keyword id="KW-0472">Membrane</keyword>
<keyword id="KW-0597">Phosphoprotein</keyword>
<keyword id="KW-1185">Reference proteome</keyword>
<keyword id="KW-0735">Signal-anchor</keyword>
<keyword id="KW-0812">Transmembrane</keyword>
<keyword id="KW-1133">Transmembrane helix</keyword>
<keyword id="KW-0832">Ubl conjugation</keyword>
<gene>
    <name evidence="25" type="primary">Pnpla2</name>
    <name type="synonym">Atgl</name>
</gene>
<name>PLPL2_MOUSE</name>